<keyword id="KW-0256">Endoplasmic reticulum</keyword>
<keyword id="KW-0333">Golgi apparatus</keyword>
<keyword id="KW-0469">Meiosis</keyword>
<keyword id="KW-0472">Membrane</keyword>
<keyword id="KW-1185">Reference proteome</keyword>
<keyword id="KW-0812">Transmembrane</keyword>
<keyword id="KW-1133">Transmembrane helix</keyword>
<keyword id="KW-0926">Vacuole</keyword>
<reference key="1">
    <citation type="journal article" date="2002" name="Nature">
        <title>The genome sequence of Schizosaccharomyces pombe.</title>
        <authorList>
            <person name="Wood V."/>
            <person name="Gwilliam R."/>
            <person name="Rajandream M.A."/>
            <person name="Lyne M.H."/>
            <person name="Lyne R."/>
            <person name="Stewart A."/>
            <person name="Sgouros J.G."/>
            <person name="Peat N."/>
            <person name="Hayles J."/>
            <person name="Baker S.G."/>
            <person name="Basham D."/>
            <person name="Bowman S."/>
            <person name="Brooks K."/>
            <person name="Brown D."/>
            <person name="Brown S."/>
            <person name="Chillingworth T."/>
            <person name="Churcher C.M."/>
            <person name="Collins M."/>
            <person name="Connor R."/>
            <person name="Cronin A."/>
            <person name="Davis P."/>
            <person name="Feltwell T."/>
            <person name="Fraser A."/>
            <person name="Gentles S."/>
            <person name="Goble A."/>
            <person name="Hamlin N."/>
            <person name="Harris D.E."/>
            <person name="Hidalgo J."/>
            <person name="Hodgson G."/>
            <person name="Holroyd S."/>
            <person name="Hornsby T."/>
            <person name="Howarth S."/>
            <person name="Huckle E.J."/>
            <person name="Hunt S."/>
            <person name="Jagels K."/>
            <person name="James K.D."/>
            <person name="Jones L."/>
            <person name="Jones M."/>
            <person name="Leather S."/>
            <person name="McDonald S."/>
            <person name="McLean J."/>
            <person name="Mooney P."/>
            <person name="Moule S."/>
            <person name="Mungall K.L."/>
            <person name="Murphy L.D."/>
            <person name="Niblett D."/>
            <person name="Odell C."/>
            <person name="Oliver K."/>
            <person name="O'Neil S."/>
            <person name="Pearson D."/>
            <person name="Quail M.A."/>
            <person name="Rabbinowitsch E."/>
            <person name="Rutherford K.M."/>
            <person name="Rutter S."/>
            <person name="Saunders D."/>
            <person name="Seeger K."/>
            <person name="Sharp S."/>
            <person name="Skelton J."/>
            <person name="Simmonds M.N."/>
            <person name="Squares R."/>
            <person name="Squares S."/>
            <person name="Stevens K."/>
            <person name="Taylor K."/>
            <person name="Taylor R.G."/>
            <person name="Tivey A."/>
            <person name="Walsh S.V."/>
            <person name="Warren T."/>
            <person name="Whitehead S."/>
            <person name="Woodward J.R."/>
            <person name="Volckaert G."/>
            <person name="Aert R."/>
            <person name="Robben J."/>
            <person name="Grymonprez B."/>
            <person name="Weltjens I."/>
            <person name="Vanstreels E."/>
            <person name="Rieger M."/>
            <person name="Schaefer M."/>
            <person name="Mueller-Auer S."/>
            <person name="Gabel C."/>
            <person name="Fuchs M."/>
            <person name="Duesterhoeft A."/>
            <person name="Fritzc C."/>
            <person name="Holzer E."/>
            <person name="Moestl D."/>
            <person name="Hilbert H."/>
            <person name="Borzym K."/>
            <person name="Langer I."/>
            <person name="Beck A."/>
            <person name="Lehrach H."/>
            <person name="Reinhardt R."/>
            <person name="Pohl T.M."/>
            <person name="Eger P."/>
            <person name="Zimmermann W."/>
            <person name="Wedler H."/>
            <person name="Wambutt R."/>
            <person name="Purnelle B."/>
            <person name="Goffeau A."/>
            <person name="Cadieu E."/>
            <person name="Dreano S."/>
            <person name="Gloux S."/>
            <person name="Lelaure V."/>
            <person name="Mottier S."/>
            <person name="Galibert F."/>
            <person name="Aves S.J."/>
            <person name="Xiang Z."/>
            <person name="Hunt C."/>
            <person name="Moore K."/>
            <person name="Hurst S.M."/>
            <person name="Lucas M."/>
            <person name="Rochet M."/>
            <person name="Gaillardin C."/>
            <person name="Tallada V.A."/>
            <person name="Garzon A."/>
            <person name="Thode G."/>
            <person name="Daga R.R."/>
            <person name="Cruzado L."/>
            <person name="Jimenez J."/>
            <person name="Sanchez M."/>
            <person name="del Rey F."/>
            <person name="Benito J."/>
            <person name="Dominguez A."/>
            <person name="Revuelta J.L."/>
            <person name="Moreno S."/>
            <person name="Armstrong J."/>
            <person name="Forsburg S.L."/>
            <person name="Cerutti L."/>
            <person name="Lowe T."/>
            <person name="McCombie W.R."/>
            <person name="Paulsen I."/>
            <person name="Potashkin J."/>
            <person name="Shpakovski G.V."/>
            <person name="Ussery D."/>
            <person name="Barrell B.G."/>
            <person name="Nurse P."/>
        </authorList>
    </citation>
    <scope>NUCLEOTIDE SEQUENCE [LARGE SCALE GENOMIC DNA]</scope>
    <source>
        <strain>972 / ATCC 24843</strain>
    </source>
</reference>
<reference key="2">
    <citation type="journal article" date="2005" name="Curr. Biol.">
        <title>A large-scale screen in S. pombe identifies seven novel genes required for critical meiotic events.</title>
        <authorList>
            <person name="Martin-Castellanos C."/>
            <person name="Blanco M."/>
            <person name="Rozalen A.E."/>
            <person name="Perez-Hidalgo L."/>
            <person name="Garcia A.I."/>
            <person name="Conde F."/>
            <person name="Mata J."/>
            <person name="Ellermeier C."/>
            <person name="Davis L."/>
            <person name="San-Segundo P."/>
            <person name="Smith G.R."/>
            <person name="Moreno S."/>
        </authorList>
    </citation>
    <scope>FUNCTION IN MEIOSIS</scope>
</reference>
<reference key="3">
    <citation type="journal article" date="2006" name="Nat. Biotechnol.">
        <title>ORFeome cloning and global analysis of protein localization in the fission yeast Schizosaccharomyces pombe.</title>
        <authorList>
            <person name="Matsuyama A."/>
            <person name="Arai R."/>
            <person name="Yashiroda Y."/>
            <person name="Shirai A."/>
            <person name="Kamata A."/>
            <person name="Sekido S."/>
            <person name="Kobayashi Y."/>
            <person name="Hashimoto A."/>
            <person name="Hamamoto M."/>
            <person name="Hiraoka Y."/>
            <person name="Horinouchi S."/>
            <person name="Yoshida M."/>
        </authorList>
    </citation>
    <scope>SUBCELLULAR LOCATION [LARGE SCALE ANALYSIS]</scope>
</reference>
<accession>O14201</accession>
<gene>
    <name type="primary">mug86</name>
    <name type="ORF">SPAC5D6.09c</name>
</gene>
<comment type="function">
    <text evidence="3">Has a role in meiosis.</text>
</comment>
<comment type="subcellular location">
    <subcellularLocation>
        <location evidence="4">Endoplasmic reticulum membrane</location>
        <topology evidence="4">Multi-pass membrane protein</topology>
    </subcellularLocation>
    <subcellularLocation>
        <location evidence="4">Golgi apparatus</location>
        <location evidence="4">Golgi stack membrane</location>
        <topology evidence="4">Multi-pass membrane protein</topology>
    </subcellularLocation>
    <subcellularLocation>
        <location evidence="4">Vacuole membrane</location>
        <topology evidence="4">Multi-pass membrane protein</topology>
    </subcellularLocation>
</comment>
<comment type="similarity">
    <text evidence="5">Belongs to the acetate uptake transporter (AceTr) (TC 2.A.96) family.</text>
</comment>
<dbReference type="EMBL" id="CU329670">
    <property type="protein sequence ID" value="CAB10857.1"/>
    <property type="molecule type" value="Genomic_DNA"/>
</dbReference>
<dbReference type="PIR" id="T38957">
    <property type="entry name" value="T38957"/>
</dbReference>
<dbReference type="RefSeq" id="NP_593360.1">
    <property type="nucleotide sequence ID" value="NM_001018792.2"/>
</dbReference>
<dbReference type="SMR" id="O14201"/>
<dbReference type="BioGRID" id="278503">
    <property type="interactions" value="4"/>
</dbReference>
<dbReference type="FunCoup" id="O14201">
    <property type="interactions" value="63"/>
</dbReference>
<dbReference type="STRING" id="284812.O14201"/>
<dbReference type="TCDB" id="2.A.96.1.6">
    <property type="family name" value="the acetate uptake transporter (acetr) family"/>
</dbReference>
<dbReference type="iPTMnet" id="O14201"/>
<dbReference type="PaxDb" id="4896-SPAC5D6.09c.1"/>
<dbReference type="EnsemblFungi" id="SPAC5D6.09c.1">
    <property type="protein sequence ID" value="SPAC5D6.09c.1:pep"/>
    <property type="gene ID" value="SPAC5D6.09c"/>
</dbReference>
<dbReference type="GeneID" id="2542020"/>
<dbReference type="KEGG" id="spo:2542020"/>
<dbReference type="PomBase" id="SPAC5D6.09c">
    <property type="gene designation" value="mug86"/>
</dbReference>
<dbReference type="VEuPathDB" id="FungiDB:SPAC5D6.09c"/>
<dbReference type="eggNOG" id="ENOG502QUJS">
    <property type="taxonomic scope" value="Eukaryota"/>
</dbReference>
<dbReference type="HOGENOM" id="CLU_051062_0_1_1"/>
<dbReference type="InParanoid" id="O14201"/>
<dbReference type="OMA" id="MWEMASG"/>
<dbReference type="PhylomeDB" id="O14201"/>
<dbReference type="PRO" id="PR:O14201"/>
<dbReference type="Proteomes" id="UP000002485">
    <property type="component" value="Chromosome I"/>
</dbReference>
<dbReference type="GO" id="GO:0005789">
    <property type="term" value="C:endoplasmic reticulum membrane"/>
    <property type="evidence" value="ECO:0007669"/>
    <property type="project" value="UniProtKB-SubCell"/>
</dbReference>
<dbReference type="GO" id="GO:0000329">
    <property type="term" value="C:fungal-type vacuole membrane"/>
    <property type="evidence" value="ECO:0007005"/>
    <property type="project" value="PomBase"/>
</dbReference>
<dbReference type="GO" id="GO:0005794">
    <property type="term" value="C:Golgi apparatus"/>
    <property type="evidence" value="ECO:0007005"/>
    <property type="project" value="PomBase"/>
</dbReference>
<dbReference type="GO" id="GO:0032580">
    <property type="term" value="C:Golgi cisterna membrane"/>
    <property type="evidence" value="ECO:0007669"/>
    <property type="project" value="UniProtKB-SubCell"/>
</dbReference>
<dbReference type="GO" id="GO:0005886">
    <property type="term" value="C:plasma membrane"/>
    <property type="evidence" value="ECO:0000318"/>
    <property type="project" value="GO_Central"/>
</dbReference>
<dbReference type="GO" id="GO:0015123">
    <property type="term" value="F:acetate transmembrane transporter activity"/>
    <property type="evidence" value="ECO:0000318"/>
    <property type="project" value="GO_Central"/>
</dbReference>
<dbReference type="GO" id="GO:0051321">
    <property type="term" value="P:meiotic cell cycle"/>
    <property type="evidence" value="ECO:0007669"/>
    <property type="project" value="UniProtKB-KW"/>
</dbReference>
<dbReference type="GO" id="GO:0006847">
    <property type="term" value="P:plasma membrane acetate transport"/>
    <property type="evidence" value="ECO:0000250"/>
    <property type="project" value="PomBase"/>
</dbReference>
<dbReference type="InterPro" id="IPR051633">
    <property type="entry name" value="AceTr"/>
</dbReference>
<dbReference type="InterPro" id="IPR000791">
    <property type="entry name" value="Gpr1/Fun34/SatP-like"/>
</dbReference>
<dbReference type="InterPro" id="IPR047622">
    <property type="entry name" value="GPR1_FUN34_YAAH"/>
</dbReference>
<dbReference type="NCBIfam" id="NF038013">
    <property type="entry name" value="AceTr_1"/>
    <property type="match status" value="1"/>
</dbReference>
<dbReference type="PANTHER" id="PTHR31123">
    <property type="entry name" value="ACCUMULATION OF DYADS PROTEIN 2-RELATED"/>
    <property type="match status" value="1"/>
</dbReference>
<dbReference type="PANTHER" id="PTHR31123:SF1">
    <property type="entry name" value="ACCUMULATION OF DYADS PROTEIN 2-RELATED"/>
    <property type="match status" value="1"/>
</dbReference>
<dbReference type="Pfam" id="PF01184">
    <property type="entry name" value="Gpr1_Fun34_YaaH"/>
    <property type="match status" value="1"/>
</dbReference>
<dbReference type="PROSITE" id="PS01114">
    <property type="entry name" value="GPR1_FUN34_YAAH"/>
    <property type="match status" value="1"/>
</dbReference>
<proteinExistence type="evidence at protein level"/>
<sequence length="304" mass="33920">MSSNPSRSNSRSKNGDLESGLKFVDNDHDSKDIEARNRNHFYGFRAEPIYDQTERLANQVAELQEQQKRLFGPSGADFEPNIHRLRYINYGNPAPFGLSAFAFTTFLLSLFNVNAGHVKVSNMVTAPAAFYGGLAQLLASMWEMASGNTFGGAVFGSYGCFWLSYASIFIPWFNIQNSYDDPNDFNYAIGLYLICWFIFTFLVLLCTVRSTLAFFSLFMSLDVCFLLLACAFLRTSDGSPNVVLIRVGGAFGIFSACAAWYNAMAGLATIENSFFTVPRAIFPWSLEGLGPEEANRRRMMADDK</sequence>
<name>MUG86_SCHPO</name>
<evidence type="ECO:0000255" key="1"/>
<evidence type="ECO:0000256" key="2">
    <source>
        <dbReference type="SAM" id="MobiDB-lite"/>
    </source>
</evidence>
<evidence type="ECO:0000269" key="3">
    <source>
    </source>
</evidence>
<evidence type="ECO:0000269" key="4">
    <source>
    </source>
</evidence>
<evidence type="ECO:0000305" key="5"/>
<protein>
    <recommendedName>
        <fullName>Meiotically up-regulated gene 86 protein</fullName>
    </recommendedName>
</protein>
<organism>
    <name type="scientific">Schizosaccharomyces pombe (strain 972 / ATCC 24843)</name>
    <name type="common">Fission yeast</name>
    <dbReference type="NCBI Taxonomy" id="284812"/>
    <lineage>
        <taxon>Eukaryota</taxon>
        <taxon>Fungi</taxon>
        <taxon>Dikarya</taxon>
        <taxon>Ascomycota</taxon>
        <taxon>Taphrinomycotina</taxon>
        <taxon>Schizosaccharomycetes</taxon>
        <taxon>Schizosaccharomycetales</taxon>
        <taxon>Schizosaccharomycetaceae</taxon>
        <taxon>Schizosaccharomyces</taxon>
    </lineage>
</organism>
<feature type="chain" id="PRO_0000278568" description="Meiotically up-regulated gene 86 protein">
    <location>
        <begin position="1"/>
        <end position="304"/>
    </location>
</feature>
<feature type="transmembrane region" description="Helical" evidence="1">
    <location>
        <begin position="93"/>
        <end position="113"/>
    </location>
</feature>
<feature type="transmembrane region" description="Helical" evidence="1">
    <location>
        <begin position="123"/>
        <end position="143"/>
    </location>
</feature>
<feature type="transmembrane region" description="Helical" evidence="1">
    <location>
        <begin position="150"/>
        <end position="170"/>
    </location>
</feature>
<feature type="transmembrane region" description="Helical" evidence="1">
    <location>
        <begin position="188"/>
        <end position="208"/>
    </location>
</feature>
<feature type="transmembrane region" description="Helical" evidence="1">
    <location>
        <begin position="212"/>
        <end position="232"/>
    </location>
</feature>
<feature type="transmembrane region" description="Helical" evidence="1">
    <location>
        <begin position="247"/>
        <end position="267"/>
    </location>
</feature>
<feature type="region of interest" description="Disordered" evidence="2">
    <location>
        <begin position="1"/>
        <end position="23"/>
    </location>
</feature>
<feature type="compositionally biased region" description="Low complexity" evidence="2">
    <location>
        <begin position="1"/>
        <end position="12"/>
    </location>
</feature>